<accession>Q3V4V9</accession>
<organismHost>
    <name type="scientific">Acidianus convivator</name>
    <dbReference type="NCBI Taxonomy" id="269667"/>
</organismHost>
<proteinExistence type="predicted"/>
<keyword id="KW-1185">Reference proteome</keyword>
<protein>
    <recommendedName>
        <fullName>Uncharacterized protein ORF59b</fullName>
    </recommendedName>
</protein>
<name>Y059B_ATV</name>
<feature type="chain" id="PRO_0000389037" description="Uncharacterized protein ORF59b">
    <location>
        <begin position="1"/>
        <end position="59"/>
    </location>
</feature>
<organism>
    <name type="scientific">Acidianus two-tailed virus</name>
    <name type="common">ATV</name>
    <dbReference type="NCBI Taxonomy" id="315953"/>
    <lineage>
        <taxon>Viruses</taxon>
        <taxon>Viruses incertae sedis</taxon>
        <taxon>Bicaudaviridae</taxon>
        <taxon>Bicaudavirus</taxon>
    </lineage>
</organism>
<reference key="1">
    <citation type="journal article" date="2005" name="Nature">
        <title>Virology: independent virus development outside a host.</title>
        <authorList>
            <person name="Haring M."/>
            <person name="Vestergaard G."/>
            <person name="Rachel R."/>
            <person name="Chen L."/>
            <person name="Garrett R.A."/>
            <person name="Prangishvili D."/>
        </authorList>
    </citation>
    <scope>NUCLEOTIDE SEQUENCE [GENOMIC DNA]</scope>
</reference>
<sequence>MKMRVVSFKAEEDLLVLLDRYAMKYKLNRSEAIRKAIENLVKDEVSEGTVARVEKILLW</sequence>
<dbReference type="EMBL" id="AJ888457">
    <property type="protein sequence ID" value="CAI59855.1"/>
    <property type="molecule type" value="Genomic_DNA"/>
</dbReference>
<dbReference type="RefSeq" id="YP_319858.1">
    <property type="nucleotide sequence ID" value="NC_007409.1"/>
</dbReference>
<dbReference type="SMR" id="Q3V4V9"/>
<dbReference type="GeneID" id="4484230"/>
<dbReference type="KEGG" id="vg:4484230"/>
<dbReference type="OrthoDB" id="28320at10239"/>
<dbReference type="Proteomes" id="UP000002150">
    <property type="component" value="Genome"/>
</dbReference>
<dbReference type="GO" id="GO:0006355">
    <property type="term" value="P:regulation of DNA-templated transcription"/>
    <property type="evidence" value="ECO:0007669"/>
    <property type="project" value="InterPro"/>
</dbReference>
<dbReference type="Gene3D" id="1.10.1220.10">
    <property type="entry name" value="Met repressor-like"/>
    <property type="match status" value="1"/>
</dbReference>
<dbReference type="InterPro" id="IPR013321">
    <property type="entry name" value="Arc_rbn_hlx_hlx"/>
</dbReference>
<dbReference type="InterPro" id="IPR002145">
    <property type="entry name" value="CopG"/>
</dbReference>
<dbReference type="InterPro" id="IPR010985">
    <property type="entry name" value="Ribbon_hlx_hlx"/>
</dbReference>
<dbReference type="Pfam" id="PF01402">
    <property type="entry name" value="RHH_1"/>
    <property type="match status" value="1"/>
</dbReference>
<dbReference type="SUPFAM" id="SSF47598">
    <property type="entry name" value="Ribbon-helix-helix"/>
    <property type="match status" value="1"/>
</dbReference>